<feature type="chain" id="PRO_1000000293" description="HGPRTase-like protein 1">
    <location>
        <begin position="1"/>
        <end position="188"/>
    </location>
</feature>
<proteinExistence type="inferred from homology"/>
<keyword id="KW-0660">Purine salvage</keyword>
<keyword id="KW-1185">Reference proteome</keyword>
<keyword id="KW-0808">Transferase</keyword>
<evidence type="ECO:0000255" key="1">
    <source>
        <dbReference type="HAMAP-Rule" id="MF_01467"/>
    </source>
</evidence>
<reference key="1">
    <citation type="journal article" date="2006" name="BMC Genomics">
        <title>The genome of the square archaeon Haloquadratum walsbyi: life at the limits of water activity.</title>
        <authorList>
            <person name="Bolhuis H."/>
            <person name="Palm P."/>
            <person name="Wende A."/>
            <person name="Falb M."/>
            <person name="Rampp M."/>
            <person name="Rodriguez-Valera F."/>
            <person name="Pfeiffer F."/>
            <person name="Oesterhelt D."/>
        </authorList>
    </citation>
    <scope>NUCLEOTIDE SEQUENCE [LARGE SCALE GENOMIC DNA]</scope>
    <source>
        <strain>DSM 16790 / HBSQ001</strain>
    </source>
</reference>
<organism>
    <name type="scientific">Haloquadratum walsbyi (strain DSM 16790 / HBSQ001)</name>
    <dbReference type="NCBI Taxonomy" id="362976"/>
    <lineage>
        <taxon>Archaea</taxon>
        <taxon>Methanobacteriati</taxon>
        <taxon>Methanobacteriota</taxon>
        <taxon>Stenosarchaea group</taxon>
        <taxon>Halobacteria</taxon>
        <taxon>Halobacteriales</taxon>
        <taxon>Haloferacaceae</taxon>
        <taxon>Haloquadratum</taxon>
    </lineage>
</organism>
<name>HPRL1_HALWD</name>
<gene>
    <name type="ordered locus">HQ_1672A</name>
</gene>
<comment type="function">
    <text evidence="1">May catalyze a purine salvage reaction, the substrate is unknown.</text>
</comment>
<comment type="similarity">
    <text evidence="1">Belongs to the purine/pyrimidine phosphoribosyltransferase family. Archaeal HPRT subfamily.</text>
</comment>
<sequence length="188" mass="20577">MDQLRQSLLEAPIIEKGDYEYFVHPVSDGVPVLRPELLREIVIKIIRKVEVDNVDKIVTPAAMGIHISTAVSLMTDIPLVVIRKRQYGLEGEVSLSQQTGYAENEMYINDVRDGERVLVLDDVLSTGGTMRAVLDALDQIGAEVVDTVAVIKKAGPNELDESDHDVKTLINVRVTDGTVVIVDSNGDG</sequence>
<accession>Q18JK6</accession>
<protein>
    <recommendedName>
        <fullName evidence="1">HGPRTase-like protein 1</fullName>
        <ecNumber evidence="1">2.4.2.-</ecNumber>
    </recommendedName>
</protein>
<dbReference type="EC" id="2.4.2.-" evidence="1"/>
<dbReference type="EMBL" id="AM180088">
    <property type="protein sequence ID" value="CAJ51800.1"/>
    <property type="molecule type" value="Genomic_DNA"/>
</dbReference>
<dbReference type="SMR" id="Q18JK6"/>
<dbReference type="STRING" id="362976.HQ_1672A"/>
<dbReference type="GeneID" id="4193704"/>
<dbReference type="KEGG" id="hwa:HQ_1672A"/>
<dbReference type="eggNOG" id="arCOG00030">
    <property type="taxonomic scope" value="Archaea"/>
</dbReference>
<dbReference type="HOGENOM" id="CLU_126376_0_0_2"/>
<dbReference type="Proteomes" id="UP000001975">
    <property type="component" value="Chromosome"/>
</dbReference>
<dbReference type="GO" id="GO:0016740">
    <property type="term" value="F:transferase activity"/>
    <property type="evidence" value="ECO:0007669"/>
    <property type="project" value="UniProtKB-KW"/>
</dbReference>
<dbReference type="GO" id="GO:0006166">
    <property type="term" value="P:purine ribonucleoside salvage"/>
    <property type="evidence" value="ECO:0007669"/>
    <property type="project" value="UniProtKB-KW"/>
</dbReference>
<dbReference type="CDD" id="cd06223">
    <property type="entry name" value="PRTases_typeI"/>
    <property type="match status" value="1"/>
</dbReference>
<dbReference type="Gene3D" id="3.40.50.2020">
    <property type="match status" value="1"/>
</dbReference>
<dbReference type="HAMAP" id="MF_01467">
    <property type="entry name" value="Hypx_phosphoribosyltr"/>
    <property type="match status" value="1"/>
</dbReference>
<dbReference type="InterPro" id="IPR026597">
    <property type="entry name" value="HGPRTase-like"/>
</dbReference>
<dbReference type="InterPro" id="IPR000836">
    <property type="entry name" value="PRibTrfase_dom"/>
</dbReference>
<dbReference type="InterPro" id="IPR029057">
    <property type="entry name" value="PRTase-like"/>
</dbReference>
<dbReference type="InterPro" id="IPR050118">
    <property type="entry name" value="Pur/Pyrimidine_PRTase"/>
</dbReference>
<dbReference type="NCBIfam" id="NF040646">
    <property type="entry name" value="HPT_Archaea"/>
    <property type="match status" value="1"/>
</dbReference>
<dbReference type="NCBIfam" id="NF002635">
    <property type="entry name" value="PRK02304.1-4"/>
    <property type="match status" value="1"/>
</dbReference>
<dbReference type="PANTHER" id="PTHR43864">
    <property type="entry name" value="HYPOXANTHINE/GUANINE PHOSPHORIBOSYLTRANSFERASE"/>
    <property type="match status" value="1"/>
</dbReference>
<dbReference type="PANTHER" id="PTHR43864:SF1">
    <property type="entry name" value="XANTHINE PHOSPHORIBOSYLTRANSFERASE"/>
    <property type="match status" value="1"/>
</dbReference>
<dbReference type="Pfam" id="PF00156">
    <property type="entry name" value="Pribosyltran"/>
    <property type="match status" value="1"/>
</dbReference>
<dbReference type="SUPFAM" id="SSF53271">
    <property type="entry name" value="PRTase-like"/>
    <property type="match status" value="1"/>
</dbReference>
<dbReference type="PROSITE" id="PS00103">
    <property type="entry name" value="PUR_PYR_PR_TRANSFER"/>
    <property type="match status" value="1"/>
</dbReference>